<accession>Q1HQ10</accession>
<organism>
    <name type="scientific">Bombyx mori</name>
    <name type="common">Silk moth</name>
    <dbReference type="NCBI Taxonomy" id="7091"/>
    <lineage>
        <taxon>Eukaryota</taxon>
        <taxon>Metazoa</taxon>
        <taxon>Ecdysozoa</taxon>
        <taxon>Arthropoda</taxon>
        <taxon>Hexapoda</taxon>
        <taxon>Insecta</taxon>
        <taxon>Pterygota</taxon>
        <taxon>Neoptera</taxon>
        <taxon>Endopterygota</taxon>
        <taxon>Lepidoptera</taxon>
        <taxon>Glossata</taxon>
        <taxon>Ditrysia</taxon>
        <taxon>Bombycoidea</taxon>
        <taxon>Bombycidae</taxon>
        <taxon>Bombycinae</taxon>
        <taxon>Bombyx</taxon>
    </lineage>
</organism>
<feature type="chain" id="PRO_0000367853" description="Ubiquitin-related modifier 1 homolog">
    <location>
        <begin position="1"/>
        <end position="109"/>
    </location>
</feature>
<feature type="modified residue" description="1-thioglycine" evidence="1">
    <location>
        <position position="109"/>
    </location>
</feature>
<feature type="cross-link" description="Glycyl lysine isopeptide (Gly-Lys) (interchain with K-? in acceptor proteins)" evidence="1">
    <location>
        <position position="109"/>
    </location>
</feature>
<proteinExistence type="inferred from homology"/>
<name>URM1_BOMMO</name>
<reference key="1">
    <citation type="submission" date="2006-03" db="EMBL/GenBank/DDBJ databases">
        <title>Blast silkworm EST database for functional genes.</title>
        <authorList>
            <person name="Niu B.L."/>
            <person name="Meng Z.Q."/>
            <person name="Weng H.B."/>
            <person name="Shen W.F."/>
            <person name="He L.H."/>
            <person name="Zheng K.F."/>
            <person name="Ye S.T."/>
            <person name="Lin T.B."/>
            <person name="Chen J.E."/>
        </authorList>
    </citation>
    <scope>NUCLEOTIDE SEQUENCE [LARGE SCALE MRNA]</scope>
</reference>
<sequence>MAETLTVEVMFGGGAELLFNKVKRKEIALPPLKTFLPDSQNQNWTLKELLIWLKDNLLVEREELFLKDDSVRPGILVLINEEDWELHGQLNYELKENDKIMFISTLHGG</sequence>
<protein>
    <recommendedName>
        <fullName evidence="1">Ubiquitin-related modifier 1 homolog</fullName>
    </recommendedName>
</protein>
<keyword id="KW-0963">Cytoplasm</keyword>
<keyword id="KW-1017">Isopeptide bond</keyword>
<keyword id="KW-1185">Reference proteome</keyword>
<keyword id="KW-0819">tRNA processing</keyword>
<keyword id="KW-0833">Ubl conjugation pathway</keyword>
<comment type="function">
    <text evidence="1">Acts as a sulfur carrier required for 2-thiolation of mcm(5)S(2)U at tRNA wobble positions of cytosolic tRNA(Lys), tRNA(Glu) and tRNA(Gln). Serves as sulfur donor in tRNA 2-thiolation reaction by being thiocarboxylated (-COSH) at its C-terminus by MOCS3. The sulfur is then transferred to tRNA to form 2-thiolation of mcm(5)S(2)U. Also acts as a ubiquitin-like protein (UBL) that is covalently conjugated via an isopeptide bond to lysine residues of target proteins. The thiocarboxylated form serves as substrate for conjugation and oxidative stress specifically induces the formation of UBL-protein conjugates.</text>
</comment>
<comment type="pathway">
    <text evidence="1">tRNA modification; 5-methoxycarbonylmethyl-2-thiouridine-tRNA biosynthesis.</text>
</comment>
<comment type="subcellular location">
    <subcellularLocation>
        <location evidence="1">Cytoplasm</location>
    </subcellularLocation>
</comment>
<comment type="PTM">
    <text evidence="1">C-terminal thiocarboxylation occurs in 2 steps, it is first acyl-adenylated (-COAMP) via the hesA/moeB/thiF part of the MOCS3 homolog, then thiocarboxylated (-COSH) via the rhodanese domain of the MOCS3 homolog.</text>
</comment>
<comment type="similarity">
    <text evidence="1">Belongs to the URM1 family.</text>
</comment>
<dbReference type="EMBL" id="DQ443242">
    <property type="protein sequence ID" value="ABF51331.1"/>
    <property type="molecule type" value="mRNA"/>
</dbReference>
<dbReference type="RefSeq" id="NP_001040521.1">
    <property type="nucleotide sequence ID" value="NM_001047056.1"/>
</dbReference>
<dbReference type="SMR" id="Q1HQ10"/>
<dbReference type="FunCoup" id="Q1HQ10">
    <property type="interactions" value="1186"/>
</dbReference>
<dbReference type="STRING" id="7091.Q1HQ10"/>
<dbReference type="PaxDb" id="7091-BGIBMGA001700-TA"/>
<dbReference type="EnsemblMetazoa" id="NM_001047056.1">
    <property type="protein sequence ID" value="NP_001040521.1"/>
    <property type="gene ID" value="LOC733109"/>
</dbReference>
<dbReference type="GeneID" id="733109"/>
<dbReference type="KEGG" id="bmor:733109"/>
<dbReference type="CTD" id="81605"/>
<dbReference type="eggNOG" id="KOG4146">
    <property type="taxonomic scope" value="Eukaryota"/>
</dbReference>
<dbReference type="HOGENOM" id="CLU_148208_0_1_1"/>
<dbReference type="InParanoid" id="Q1HQ10"/>
<dbReference type="OMA" id="DYELQPN"/>
<dbReference type="OrthoDB" id="405100at7088"/>
<dbReference type="UniPathway" id="UPA00988"/>
<dbReference type="Proteomes" id="UP000005204">
    <property type="component" value="Unassembled WGS sequence"/>
</dbReference>
<dbReference type="GO" id="GO:0005829">
    <property type="term" value="C:cytosol"/>
    <property type="evidence" value="ECO:0007669"/>
    <property type="project" value="UniProtKB-UniRule"/>
</dbReference>
<dbReference type="GO" id="GO:0032447">
    <property type="term" value="P:protein urmylation"/>
    <property type="evidence" value="ECO:0007669"/>
    <property type="project" value="UniProtKB-UniRule"/>
</dbReference>
<dbReference type="GO" id="GO:0034227">
    <property type="term" value="P:tRNA thio-modification"/>
    <property type="evidence" value="ECO:0007669"/>
    <property type="project" value="UniProtKB-UniRule"/>
</dbReference>
<dbReference type="GO" id="GO:0002098">
    <property type="term" value="P:tRNA wobble uridine modification"/>
    <property type="evidence" value="ECO:0007669"/>
    <property type="project" value="UniProtKB-UniRule"/>
</dbReference>
<dbReference type="CDD" id="cd01764">
    <property type="entry name" value="Ubl_Urm1"/>
    <property type="match status" value="1"/>
</dbReference>
<dbReference type="FunFam" id="3.10.20.30:FF:000021">
    <property type="entry name" value="Ubiquitin-related modifier 1"/>
    <property type="match status" value="1"/>
</dbReference>
<dbReference type="Gene3D" id="3.10.20.30">
    <property type="match status" value="1"/>
</dbReference>
<dbReference type="HAMAP" id="MF_03048">
    <property type="entry name" value="Urm1"/>
    <property type="match status" value="1"/>
</dbReference>
<dbReference type="InterPro" id="IPR012675">
    <property type="entry name" value="Beta-grasp_dom_sf"/>
</dbReference>
<dbReference type="InterPro" id="IPR016155">
    <property type="entry name" value="Mopterin_synth/thiamin_S_b"/>
</dbReference>
<dbReference type="InterPro" id="IPR015221">
    <property type="entry name" value="Urm1"/>
</dbReference>
<dbReference type="PANTHER" id="PTHR14986">
    <property type="entry name" value="RURM1 PROTEIN"/>
    <property type="match status" value="1"/>
</dbReference>
<dbReference type="Pfam" id="PF09138">
    <property type="entry name" value="Urm1"/>
    <property type="match status" value="1"/>
</dbReference>
<dbReference type="PIRSF" id="PIRSF037379">
    <property type="entry name" value="Ubiquitin-related_modifier_1"/>
    <property type="match status" value="1"/>
</dbReference>
<dbReference type="SUPFAM" id="SSF54285">
    <property type="entry name" value="MoaD/ThiS"/>
    <property type="match status" value="1"/>
</dbReference>
<evidence type="ECO:0000255" key="1">
    <source>
        <dbReference type="HAMAP-Rule" id="MF_03048"/>
    </source>
</evidence>